<accession>Q6M0E6</accession>
<feature type="chain" id="PRO_0000232389" description="Glyceraldehyde-3-phosphate dehydrogenase">
    <location>
        <begin position="1"/>
        <end position="340"/>
    </location>
</feature>
<feature type="active site" description="Nucleophile" evidence="1">
    <location>
        <position position="141"/>
    </location>
</feature>
<feature type="binding site" evidence="1">
    <location>
        <begin position="11"/>
        <end position="12"/>
    </location>
    <ligand>
        <name>NAD(+)</name>
        <dbReference type="ChEBI" id="CHEBI:57540"/>
    </ligand>
</feature>
<feature type="binding site" evidence="1">
    <location>
        <position position="111"/>
    </location>
    <ligand>
        <name>NAD(+)</name>
        <dbReference type="ChEBI" id="CHEBI:57540"/>
    </ligand>
</feature>
<feature type="binding site" evidence="1">
    <location>
        <begin position="140"/>
        <end position="142"/>
    </location>
    <ligand>
        <name>D-glyceraldehyde 3-phosphate</name>
        <dbReference type="ChEBI" id="CHEBI:59776"/>
    </ligand>
</feature>
<feature type="binding site" evidence="1">
    <location>
        <position position="169"/>
    </location>
    <ligand>
        <name>NAD(+)</name>
        <dbReference type="ChEBI" id="CHEBI:57540"/>
    </ligand>
</feature>
<feature type="binding site" evidence="1">
    <location>
        <begin position="195"/>
        <end position="196"/>
    </location>
    <ligand>
        <name>D-glyceraldehyde 3-phosphate</name>
        <dbReference type="ChEBI" id="CHEBI:59776"/>
    </ligand>
</feature>
<feature type="binding site" evidence="1">
    <location>
        <position position="303"/>
    </location>
    <ligand>
        <name>NAD(+)</name>
        <dbReference type="ChEBI" id="CHEBI:57540"/>
    </ligand>
</feature>
<protein>
    <recommendedName>
        <fullName evidence="1">Glyceraldehyde-3-phosphate dehydrogenase</fullName>
        <shortName evidence="1">GAPDH</shortName>
        <ecNumber evidence="1">1.2.1.59</ecNumber>
    </recommendedName>
    <alternativeName>
        <fullName evidence="1">NAD(P)-dependent glyceraldehyde-3-phosphate dehydrogenase</fullName>
    </alternativeName>
</protein>
<proteinExistence type="inferred from homology"/>
<reference key="1">
    <citation type="journal article" date="2004" name="J. Bacteriol.">
        <title>Complete genome sequence of the genetically tractable hydrogenotrophic methanogen Methanococcus maripaludis.</title>
        <authorList>
            <person name="Hendrickson E.L."/>
            <person name="Kaul R."/>
            <person name="Zhou Y."/>
            <person name="Bovee D."/>
            <person name="Chapman P."/>
            <person name="Chung J."/>
            <person name="Conway de Macario E."/>
            <person name="Dodsworth J.A."/>
            <person name="Gillett W."/>
            <person name="Graham D.E."/>
            <person name="Hackett M."/>
            <person name="Haydock A.K."/>
            <person name="Kang A."/>
            <person name="Land M.L."/>
            <person name="Levy R."/>
            <person name="Lie T.J."/>
            <person name="Major T.A."/>
            <person name="Moore B.C."/>
            <person name="Porat I."/>
            <person name="Palmeiri A."/>
            <person name="Rouse G."/>
            <person name="Saenphimmachak C."/>
            <person name="Soell D."/>
            <person name="Van Dien S."/>
            <person name="Wang T."/>
            <person name="Whitman W.B."/>
            <person name="Xia Q."/>
            <person name="Zhang Y."/>
            <person name="Larimer F.W."/>
            <person name="Olson M.V."/>
            <person name="Leigh J.A."/>
        </authorList>
    </citation>
    <scope>NUCLEOTIDE SEQUENCE [LARGE SCALE GENOMIC DNA]</scope>
    <source>
        <strain>DSM 14266 / JCM 13030 / NBRC 101832 / S2 / LL</strain>
    </source>
</reference>
<sequence length="340" mass="37270">MANVLINGYGSIGKRVADAVAKQDDMKVIGVTKTKPDFEAKMAVEKGYKLFAAIPERKHLFEEAGIPVEGTLDDIIEDADIVVDGAPKKIGKANLENVYKKHGVKAIIQGGEKAGDAQDSFNSLWSYDRCYGKDYIRLVSCNTTGLCRSMYAINSVADILKARIVLIRRAADPNDIKTGPVNAIVPNPVTVPSHHGPDVVSVIPELDGKIMTSAVIVPTTLMHMHSIMVETSGTNRDEIIDALAKTPRILTVKASEGFDSTAKIIEYARDLGRSRYDLNEIAVWEESVNVVDNEVYMMQAIHQESDVIPENVDCIRAMLEMESDNLKSIEKTNKALGLIK</sequence>
<keyword id="KW-0963">Cytoplasm</keyword>
<keyword id="KW-0324">Glycolysis</keyword>
<keyword id="KW-0520">NAD</keyword>
<keyword id="KW-0521">NADP</keyword>
<keyword id="KW-0560">Oxidoreductase</keyword>
<keyword id="KW-1185">Reference proteome</keyword>
<name>G3P_METMP</name>
<comment type="catalytic activity">
    <reaction evidence="1">
        <text>D-glyceraldehyde 3-phosphate + phosphate + NADP(+) = (2R)-3-phospho-glyceroyl phosphate + NADPH + H(+)</text>
        <dbReference type="Rhea" id="RHEA:10296"/>
        <dbReference type="ChEBI" id="CHEBI:15378"/>
        <dbReference type="ChEBI" id="CHEBI:43474"/>
        <dbReference type="ChEBI" id="CHEBI:57604"/>
        <dbReference type="ChEBI" id="CHEBI:57783"/>
        <dbReference type="ChEBI" id="CHEBI:58349"/>
        <dbReference type="ChEBI" id="CHEBI:59776"/>
        <dbReference type="EC" id="1.2.1.59"/>
    </reaction>
</comment>
<comment type="catalytic activity">
    <reaction evidence="1">
        <text>D-glyceraldehyde 3-phosphate + phosphate + NAD(+) = (2R)-3-phospho-glyceroyl phosphate + NADH + H(+)</text>
        <dbReference type="Rhea" id="RHEA:10300"/>
        <dbReference type="ChEBI" id="CHEBI:15378"/>
        <dbReference type="ChEBI" id="CHEBI:43474"/>
        <dbReference type="ChEBI" id="CHEBI:57540"/>
        <dbReference type="ChEBI" id="CHEBI:57604"/>
        <dbReference type="ChEBI" id="CHEBI:57945"/>
        <dbReference type="ChEBI" id="CHEBI:59776"/>
        <dbReference type="EC" id="1.2.1.59"/>
    </reaction>
</comment>
<comment type="pathway">
    <text evidence="1">Carbohydrate degradation; glycolysis; pyruvate from D-glyceraldehyde 3-phosphate: step 1/5.</text>
</comment>
<comment type="subunit">
    <text evidence="1">Homotetramer.</text>
</comment>
<comment type="subcellular location">
    <subcellularLocation>
        <location evidence="1">Cytoplasm</location>
    </subcellularLocation>
</comment>
<comment type="similarity">
    <text evidence="1">Belongs to the glyceraldehyde-3-phosphate dehydrogenase family.</text>
</comment>
<dbReference type="EC" id="1.2.1.59" evidence="1"/>
<dbReference type="EMBL" id="BX950229">
    <property type="protein sequence ID" value="CAF29881.1"/>
    <property type="molecule type" value="Genomic_DNA"/>
</dbReference>
<dbReference type="RefSeq" id="WP_011170269.1">
    <property type="nucleotide sequence ID" value="NC_005791.1"/>
</dbReference>
<dbReference type="SMR" id="Q6M0E6"/>
<dbReference type="STRING" id="267377.MMP0325"/>
<dbReference type="EnsemblBacteria" id="CAF29881">
    <property type="protein sequence ID" value="CAF29881"/>
    <property type="gene ID" value="MMP0325"/>
</dbReference>
<dbReference type="GeneID" id="37874841"/>
<dbReference type="KEGG" id="mmp:MMP0325"/>
<dbReference type="PATRIC" id="fig|267377.15.peg.328"/>
<dbReference type="eggNOG" id="arCOG00493">
    <property type="taxonomic scope" value="Archaea"/>
</dbReference>
<dbReference type="HOGENOM" id="CLU_069533_0_0_2"/>
<dbReference type="OrthoDB" id="295712at2157"/>
<dbReference type="UniPathway" id="UPA00109">
    <property type="reaction ID" value="UER00184"/>
</dbReference>
<dbReference type="Proteomes" id="UP000000590">
    <property type="component" value="Chromosome"/>
</dbReference>
<dbReference type="GO" id="GO:0005737">
    <property type="term" value="C:cytoplasm"/>
    <property type="evidence" value="ECO:0007669"/>
    <property type="project" value="UniProtKB-SubCell"/>
</dbReference>
<dbReference type="GO" id="GO:0008839">
    <property type="term" value="F:4-hydroxy-tetrahydrodipicolinate reductase"/>
    <property type="evidence" value="ECO:0007669"/>
    <property type="project" value="InterPro"/>
</dbReference>
<dbReference type="GO" id="GO:0004365">
    <property type="term" value="F:glyceraldehyde-3-phosphate dehydrogenase (NAD+) (phosphorylating) activity"/>
    <property type="evidence" value="ECO:0007669"/>
    <property type="project" value="UniProtKB-UniRule"/>
</dbReference>
<dbReference type="GO" id="GO:0047100">
    <property type="term" value="F:glyceraldehyde-3-phosphate dehydrogenase (NADP+) (phosphorylating) activity"/>
    <property type="evidence" value="ECO:0007669"/>
    <property type="project" value="RHEA"/>
</dbReference>
<dbReference type="GO" id="GO:0051287">
    <property type="term" value="F:NAD binding"/>
    <property type="evidence" value="ECO:0007669"/>
    <property type="project" value="InterPro"/>
</dbReference>
<dbReference type="GO" id="GO:0050661">
    <property type="term" value="F:NADP binding"/>
    <property type="evidence" value="ECO:0007669"/>
    <property type="project" value="InterPro"/>
</dbReference>
<dbReference type="GO" id="GO:0006096">
    <property type="term" value="P:glycolytic process"/>
    <property type="evidence" value="ECO:0007669"/>
    <property type="project" value="UniProtKB-UniRule"/>
</dbReference>
<dbReference type="GO" id="GO:0009089">
    <property type="term" value="P:lysine biosynthetic process via diaminopimelate"/>
    <property type="evidence" value="ECO:0007669"/>
    <property type="project" value="InterPro"/>
</dbReference>
<dbReference type="CDD" id="cd18127">
    <property type="entry name" value="GAPDH_II_C"/>
    <property type="match status" value="1"/>
</dbReference>
<dbReference type="CDD" id="cd02278">
    <property type="entry name" value="GAPDH_II_N"/>
    <property type="match status" value="1"/>
</dbReference>
<dbReference type="Gene3D" id="3.30.360.10">
    <property type="entry name" value="Dihydrodipicolinate Reductase, domain 2"/>
    <property type="match status" value="1"/>
</dbReference>
<dbReference type="Gene3D" id="3.40.50.720">
    <property type="entry name" value="NAD(P)-binding Rossmann-like Domain"/>
    <property type="match status" value="1"/>
</dbReference>
<dbReference type="HAMAP" id="MF_00559">
    <property type="entry name" value="G3P_dehdrog_arch"/>
    <property type="match status" value="1"/>
</dbReference>
<dbReference type="InterPro" id="IPR000846">
    <property type="entry name" value="DapB_N"/>
</dbReference>
<dbReference type="InterPro" id="IPR020831">
    <property type="entry name" value="GlycerAld/Erythrose_P_DH"/>
</dbReference>
<dbReference type="InterPro" id="IPR020830">
    <property type="entry name" value="GlycerAld_3-P_DH_AS"/>
</dbReference>
<dbReference type="InterPro" id="IPR020829">
    <property type="entry name" value="GlycerAld_3-P_DH_cat"/>
</dbReference>
<dbReference type="InterPro" id="IPR020828">
    <property type="entry name" value="GlycerAld_3-P_DH_NAD(P)-bd"/>
</dbReference>
<dbReference type="InterPro" id="IPR006436">
    <property type="entry name" value="Glyceraldehyde-3-P_DH_2_arc"/>
</dbReference>
<dbReference type="InterPro" id="IPR036291">
    <property type="entry name" value="NAD(P)-bd_dom_sf"/>
</dbReference>
<dbReference type="NCBIfam" id="TIGR01546">
    <property type="entry name" value="GAPDH-II_archae"/>
    <property type="match status" value="1"/>
</dbReference>
<dbReference type="NCBIfam" id="NF003251">
    <property type="entry name" value="PRK04207.1"/>
    <property type="match status" value="1"/>
</dbReference>
<dbReference type="Pfam" id="PF01113">
    <property type="entry name" value="DapB_N"/>
    <property type="match status" value="1"/>
</dbReference>
<dbReference type="Pfam" id="PF02800">
    <property type="entry name" value="Gp_dh_C"/>
    <property type="match status" value="1"/>
</dbReference>
<dbReference type="PIRSF" id="PIRSF000149">
    <property type="entry name" value="GAP_DH"/>
    <property type="match status" value="1"/>
</dbReference>
<dbReference type="SMART" id="SM00846">
    <property type="entry name" value="Gp_dh_N"/>
    <property type="match status" value="1"/>
</dbReference>
<dbReference type="SUPFAM" id="SSF55347">
    <property type="entry name" value="Glyceraldehyde-3-phosphate dehydrogenase-like, C-terminal domain"/>
    <property type="match status" value="1"/>
</dbReference>
<dbReference type="SUPFAM" id="SSF51735">
    <property type="entry name" value="NAD(P)-binding Rossmann-fold domains"/>
    <property type="match status" value="1"/>
</dbReference>
<dbReference type="PROSITE" id="PS00071">
    <property type="entry name" value="GAPDH"/>
    <property type="match status" value="1"/>
</dbReference>
<gene>
    <name evidence="1" type="primary">gap</name>
    <name type="ordered locus">MMP0325</name>
</gene>
<evidence type="ECO:0000255" key="1">
    <source>
        <dbReference type="HAMAP-Rule" id="MF_00559"/>
    </source>
</evidence>
<organism>
    <name type="scientific">Methanococcus maripaludis (strain DSM 14266 / JCM 13030 / NBRC 101832 / S2 / LL)</name>
    <dbReference type="NCBI Taxonomy" id="267377"/>
    <lineage>
        <taxon>Archaea</taxon>
        <taxon>Methanobacteriati</taxon>
        <taxon>Methanobacteriota</taxon>
        <taxon>Methanomada group</taxon>
        <taxon>Methanococci</taxon>
        <taxon>Methanococcales</taxon>
        <taxon>Methanococcaceae</taxon>
        <taxon>Methanococcus</taxon>
    </lineage>
</organism>